<evidence type="ECO:0000255" key="1">
    <source>
        <dbReference type="HAMAP-Rule" id="MF_04071"/>
    </source>
</evidence>
<evidence type="ECO:0000256" key="2">
    <source>
        <dbReference type="SAM" id="MobiDB-lite"/>
    </source>
</evidence>
<gene>
    <name evidence="1" type="primary">NA</name>
</gene>
<proteinExistence type="inferred from homology"/>
<sequence>MLPSTIQTLTLFLTSGGVLLSLYVSASLSYLLYSDILLRFSSKITAPTMTLDCANASNVQAVNRSATKEMTFLLPEPEWTYPRLSCQGSTFQKALLISPHRFGEARGNSAPLIIREPFIACGPKECKHFALTHYAAQPGGYYNGTREDRNKLRHLISVKLGKIPTVENSIFHMAAWSGSACHDGREWTYIGVDGPDSNALIKIKYGEAYTDTYHSYANNILRTQESACNCIGGDCYLMITDGSASGISECRFLKIREGRIIKEIFPTGRVEHTEECTCGFASNKTIECACRDNSYTAKRPFVKLNVETDTAEIRLMCTETYLDTPRPDDGSITGPCESDGDKGRGGIKGGFVHQRMASKIGRWYSRTMSKTERMGMELYVKYDGDPWTDSDALAPSGVMVSMKEPGWYSFGFEIKDKKCDVPCIGIEMVHDGGKKTWHSAATAIYCLMGSGQLLWDTVTGVDMAL</sequence>
<comment type="function">
    <text evidence="1">Catalyzes the removal of terminal sialic acid residues from viral and cellular glycoconjugates. Cleaves off the terminal sialic acids on the glycosylated HA during virus budding to facilitate virus release. Additionally helps virus spread through the circulation by further removing sialic acids from the cell surface. These cleavages prevent self-aggregation and ensure the efficient spread of the progeny virus from cell to cell. Otherwise, infection would be limited to one round of replication. Described as a receptor-destroying enzyme because it cleaves a terminal sialic acid from the cellular receptors. May facilitate viral invasion of the upper airways by cleaving the sialic acid moieties on the mucin of the airway epithelial cells. Likely to plays a role in the budding process through its association with lipid rafts during intracellular transport. May additionally display a raft-association independent effect on budding. Plays a role in the determination of host range restriction on replication and virulence. Sialidase activity in late endosome/lysosome traffic seems to enhance virus replication.</text>
</comment>
<comment type="catalytic activity">
    <reaction evidence="1">
        <text>Hydrolysis of alpha-(2-&gt;3)-, alpha-(2-&gt;6)-, alpha-(2-&gt;8)- glycosidic linkages of terminal sialic acid residues in oligosaccharides, glycoproteins, glycolipids, colominic acid and synthetic substrates.</text>
        <dbReference type="EC" id="3.2.1.18"/>
    </reaction>
</comment>
<comment type="cofactor">
    <cofactor evidence="1">
        <name>Ca(2+)</name>
        <dbReference type="ChEBI" id="CHEBI:29108"/>
    </cofactor>
</comment>
<comment type="activity regulation">
    <text evidence="1">Inhibited by the neuraminidase inhibitors zanamivir (Relenza) and oseltamivir (Tamiflu). These drugs interfere with the release of progeny virus from infected cells and are effective against all influenza strains. Resistance to neuraminidase inhibitors is quite rare.</text>
</comment>
<comment type="subunit">
    <text evidence="1">Homotetramer.</text>
</comment>
<comment type="subcellular location">
    <subcellularLocation>
        <location evidence="1">Virion membrane</location>
    </subcellularLocation>
    <subcellularLocation>
        <location evidence="1">Host apical cell membrane</location>
        <topology evidence="1">Single-pass type II membrane protein</topology>
    </subcellularLocation>
    <text evidence="1">Preferentially accumulates at the apical plasma membrane in infected polarized epithelial cells, which is the virus assembly site. Uses lipid rafts for cell surface transport and apical sorting. In the virion, forms a mushroom-shaped spike on the surface of the membrane.</text>
</comment>
<comment type="domain">
    <text evidence="1">Intact N-terminus is essential for virion morphogenesis. Possesses two apical sorting signals, one in the ectodomain, which is likely to be a glycan, and the other in the transmembrane domain. The transmembrane domain also plays a role in lipid raft association.</text>
</comment>
<comment type="PTM">
    <text evidence="1">N-glycosylated.</text>
</comment>
<comment type="miscellaneous">
    <text>The influenza B genome consist of 8 RNA segments. Genetic variation of hemagglutinin and/or neuraminidase genes results in the emergence of new influenza strains. The mechanism of variation can be the result of point mutations or the result of genetic reassortment between segments of two different strains.</text>
</comment>
<comment type="similarity">
    <text evidence="1">Belongs to the glycosyl hydrolase 34 family.</text>
</comment>
<reference key="1">
    <citation type="journal article" date="1990" name="Virology">
        <title>Antigenic, sequence, and crystal variation in influenza B neuraminidase.</title>
        <authorList>
            <person name="Air G.M."/>
            <person name="Laver W.G."/>
            <person name="Luo M."/>
            <person name="Stray S.J."/>
            <person name="Legrone G."/>
            <person name="Webster R.G."/>
        </authorList>
    </citation>
    <scope>NUCLEOTIDE SEQUENCE [GENOMIC RNA]</scope>
</reference>
<reference key="2">
    <citation type="journal article" date="2005" name="N. Engl. J. Med.">
        <title>Neuraminidase inhibitors for influenza.</title>
        <authorList>
            <person name="Moscona A."/>
        </authorList>
    </citation>
    <scope>REVIEW</scope>
</reference>
<name>NRAM_INBMF</name>
<keyword id="KW-0106">Calcium</keyword>
<keyword id="KW-1015">Disulfide bond</keyword>
<keyword id="KW-0325">Glycoprotein</keyword>
<keyword id="KW-0326">Glycosidase</keyword>
<keyword id="KW-1032">Host cell membrane</keyword>
<keyword id="KW-1043">Host membrane</keyword>
<keyword id="KW-0378">Hydrolase</keyword>
<keyword id="KW-0472">Membrane</keyword>
<keyword id="KW-0479">Metal-binding</keyword>
<keyword id="KW-0735">Signal-anchor</keyword>
<keyword id="KW-0812">Transmembrane</keyword>
<keyword id="KW-1133">Transmembrane helix</keyword>
<keyword id="KW-0946">Virion</keyword>
<protein>
    <recommendedName>
        <fullName evidence="1">Neuraminidase</fullName>
        <ecNumber evidence="1">3.2.1.18</ecNumber>
    </recommendedName>
</protein>
<accession>P16199</accession>
<organism>
    <name type="scientific">Influenza B virus (strain B/Memphis/3/1989)</name>
    <dbReference type="NCBI Taxonomy" id="98827"/>
    <lineage>
        <taxon>Viruses</taxon>
        <taxon>Riboviria</taxon>
        <taxon>Orthornavirae</taxon>
        <taxon>Negarnaviricota</taxon>
        <taxon>Polyploviricotina</taxon>
        <taxon>Insthoviricetes</taxon>
        <taxon>Articulavirales</taxon>
        <taxon>Orthomyxoviridae</taxon>
        <taxon>Betainfluenzavirus</taxon>
        <taxon>Betainfluenzavirus influenzae</taxon>
        <taxon>Influenza B virus</taxon>
    </lineage>
</organism>
<organismHost>
    <name type="scientific">Homo sapiens</name>
    <name type="common">Human</name>
    <dbReference type="NCBI Taxonomy" id="9606"/>
</organismHost>
<feature type="chain" id="PRO_0000078736" description="Neuraminidase">
    <location>
        <begin position="1"/>
        <end position="465"/>
    </location>
</feature>
<feature type="topological domain" description="Intravirion" evidence="1">
    <location>
        <begin position="1"/>
        <end position="11"/>
    </location>
</feature>
<feature type="transmembrane region" description="Helical" evidence="1">
    <location>
        <begin position="12"/>
        <end position="34"/>
    </location>
</feature>
<feature type="topological domain" description="Virion surface" evidence="1">
    <location>
        <begin position="35"/>
        <end position="465"/>
    </location>
</feature>
<feature type="region of interest" description="Involved in apical transport and lipid raft association" evidence="1">
    <location>
        <begin position="13"/>
        <end position="35"/>
    </location>
</feature>
<feature type="region of interest" description="Hypervariable stalk region" evidence="1">
    <location>
        <begin position="38"/>
        <end position="85"/>
    </location>
</feature>
<feature type="region of interest" description="Head of neuraminidase" evidence="1">
    <location>
        <begin position="88"/>
        <end position="465"/>
    </location>
</feature>
<feature type="region of interest" description="Disordered" evidence="2">
    <location>
        <begin position="328"/>
        <end position="347"/>
    </location>
</feature>
<feature type="active site" description="Proton donor/acceptor" evidence="1">
    <location>
        <position position="148"/>
    </location>
</feature>
<feature type="active site" description="Nucleophile" evidence="1">
    <location>
        <position position="408"/>
    </location>
</feature>
<feature type="binding site" evidence="1">
    <location>
        <position position="115"/>
    </location>
    <ligand>
        <name>substrate</name>
    </ligand>
</feature>
<feature type="binding site" evidence="1">
    <location>
        <position position="149"/>
    </location>
    <ligand>
        <name>substrate</name>
    </ligand>
</feature>
<feature type="binding site" evidence="1">
    <location>
        <begin position="274"/>
        <end position="275"/>
    </location>
    <ligand>
        <name>substrate</name>
    </ligand>
</feature>
<feature type="binding site" evidence="1">
    <location>
        <position position="291"/>
    </location>
    <ligand>
        <name>substrate</name>
    </ligand>
</feature>
<feature type="binding site" evidence="1">
    <location>
        <position position="292"/>
    </location>
    <ligand>
        <name>Ca(2+)</name>
        <dbReference type="ChEBI" id="CHEBI:29108"/>
    </ligand>
</feature>
<feature type="binding site" evidence="1">
    <location>
        <position position="323"/>
    </location>
    <ligand>
        <name>Ca(2+)</name>
        <dbReference type="ChEBI" id="CHEBI:29108"/>
    </ligand>
</feature>
<feature type="binding site" evidence="1">
    <location>
        <position position="373"/>
    </location>
    <ligand>
        <name>substrate</name>
    </ligand>
</feature>
<feature type="glycosylation site" description="N-linked (GlcNAc...) asparagine; by host" evidence="1">
    <location>
        <position position="55"/>
    </location>
</feature>
<feature type="glycosylation site" description="N-linked (GlcNAc...) asparagine; by host" evidence="1">
    <location>
        <position position="63"/>
    </location>
</feature>
<feature type="glycosylation site" description="N-linked (GlcNAc...) asparagine; by host" evidence="1">
    <location>
        <position position="143"/>
    </location>
</feature>
<feature type="glycosylation site" description="N-linked (GlcNAc...) asparagine; by host" evidence="1">
    <location>
        <position position="283"/>
    </location>
</feature>
<feature type="disulfide bond" evidence="1">
    <location>
        <begin position="86"/>
        <end position="419"/>
    </location>
</feature>
<feature type="disulfide bond" evidence="1">
    <location>
        <begin position="121"/>
        <end position="126"/>
    </location>
</feature>
<feature type="disulfide bond" evidence="1">
    <location>
        <begin position="181"/>
        <end position="228"/>
    </location>
</feature>
<feature type="disulfide bond" evidence="1">
    <location>
        <begin position="230"/>
        <end position="235"/>
    </location>
</feature>
<feature type="disulfide bond" evidence="1">
    <location>
        <begin position="276"/>
        <end position="290"/>
    </location>
</feature>
<feature type="disulfide bond" evidence="1">
    <location>
        <begin position="278"/>
        <end position="288"/>
    </location>
</feature>
<feature type="disulfide bond" evidence="1">
    <location>
        <begin position="317"/>
        <end position="336"/>
    </location>
</feature>
<feature type="disulfide bond" evidence="1">
    <location>
        <begin position="423"/>
        <end position="446"/>
    </location>
</feature>
<dbReference type="EC" id="3.2.1.18" evidence="1"/>
<dbReference type="EMBL" id="M30635">
    <property type="protein sequence ID" value="AAA43739.1"/>
    <property type="molecule type" value="Genomic_RNA"/>
</dbReference>
<dbReference type="PIR" id="A46347">
    <property type="entry name" value="A46347"/>
</dbReference>
<dbReference type="SMR" id="P16199"/>
<dbReference type="BindingDB" id="P16199"/>
<dbReference type="CAZy" id="GH34">
    <property type="family name" value="Glycoside Hydrolase Family 34"/>
</dbReference>
<dbReference type="GlyCosmos" id="P16199">
    <property type="glycosylation" value="4 sites, No reported glycans"/>
</dbReference>
<dbReference type="Proteomes" id="UP000171072">
    <property type="component" value="Genome"/>
</dbReference>
<dbReference type="GO" id="GO:0020002">
    <property type="term" value="C:host cell plasma membrane"/>
    <property type="evidence" value="ECO:0007669"/>
    <property type="project" value="UniProtKB-SubCell"/>
</dbReference>
<dbReference type="GO" id="GO:0016020">
    <property type="term" value="C:membrane"/>
    <property type="evidence" value="ECO:0007669"/>
    <property type="project" value="UniProtKB-UniRule"/>
</dbReference>
<dbReference type="GO" id="GO:0055036">
    <property type="term" value="C:virion membrane"/>
    <property type="evidence" value="ECO:0007669"/>
    <property type="project" value="UniProtKB-SubCell"/>
</dbReference>
<dbReference type="GO" id="GO:0004308">
    <property type="term" value="F:exo-alpha-sialidase activity"/>
    <property type="evidence" value="ECO:0007669"/>
    <property type="project" value="UniProtKB-UniRule"/>
</dbReference>
<dbReference type="GO" id="GO:0046872">
    <property type="term" value="F:metal ion binding"/>
    <property type="evidence" value="ECO:0007669"/>
    <property type="project" value="UniProtKB-UniRule"/>
</dbReference>
<dbReference type="GO" id="GO:0005975">
    <property type="term" value="P:carbohydrate metabolic process"/>
    <property type="evidence" value="ECO:0007669"/>
    <property type="project" value="InterPro"/>
</dbReference>
<dbReference type="GO" id="GO:0046761">
    <property type="term" value="P:viral budding from plasma membrane"/>
    <property type="evidence" value="ECO:0007669"/>
    <property type="project" value="UniProtKB-UniRule"/>
</dbReference>
<dbReference type="CDD" id="cd15483">
    <property type="entry name" value="Influenza_NA"/>
    <property type="match status" value="1"/>
</dbReference>
<dbReference type="Gene3D" id="2.120.10.10">
    <property type="match status" value="1"/>
</dbReference>
<dbReference type="HAMAP" id="MF_04071">
    <property type="entry name" value="INFV_NRAM"/>
    <property type="match status" value="1"/>
</dbReference>
<dbReference type="InterPro" id="IPR001860">
    <property type="entry name" value="Glyco_hydro_34"/>
</dbReference>
<dbReference type="InterPro" id="IPR033654">
    <property type="entry name" value="Sialidase_Influenza_A/B"/>
</dbReference>
<dbReference type="InterPro" id="IPR036278">
    <property type="entry name" value="Sialidase_sf"/>
</dbReference>
<dbReference type="Pfam" id="PF00064">
    <property type="entry name" value="Neur"/>
    <property type="match status" value="1"/>
</dbReference>
<dbReference type="SUPFAM" id="SSF50939">
    <property type="entry name" value="Sialidases"/>
    <property type="match status" value="1"/>
</dbReference>